<name>YR852_MIMIV</name>
<dbReference type="EMBL" id="AY653733">
    <property type="protein sequence ID" value="AAV51110.1"/>
    <property type="molecule type" value="Genomic_DNA"/>
</dbReference>
<dbReference type="SMR" id="Q5UP29"/>
<dbReference type="Proteomes" id="UP000001134">
    <property type="component" value="Genome"/>
</dbReference>
<dbReference type="Gene3D" id="1.25.40.80">
    <property type="match status" value="1"/>
</dbReference>
<dbReference type="Gene3D" id="3.40.50.620">
    <property type="entry name" value="HUPs"/>
    <property type="match status" value="1"/>
</dbReference>
<dbReference type="InterPro" id="IPR007357">
    <property type="entry name" value="PhrB-like"/>
</dbReference>
<dbReference type="InterPro" id="IPR014729">
    <property type="entry name" value="Rossmann-like_a/b/a_fold"/>
</dbReference>
<dbReference type="InterPro" id="IPR052551">
    <property type="entry name" value="UV-DNA_repair_photolyase"/>
</dbReference>
<dbReference type="PANTHER" id="PTHR38657">
    <property type="entry name" value="SLR1343 PROTEIN"/>
    <property type="match status" value="1"/>
</dbReference>
<dbReference type="PANTHER" id="PTHR38657:SF1">
    <property type="entry name" value="SLR1343 PROTEIN"/>
    <property type="match status" value="1"/>
</dbReference>
<dbReference type="Pfam" id="PF04244">
    <property type="entry name" value="DPRP"/>
    <property type="match status" value="1"/>
</dbReference>
<keyword id="KW-1185">Reference proteome</keyword>
<feature type="chain" id="PRO_0000253924" description="Uncharacterized protein R852">
    <location>
        <begin position="1"/>
        <end position="196"/>
    </location>
</feature>
<reference key="1">
    <citation type="journal article" date="2004" name="Science">
        <title>The 1.2-megabase genome sequence of Mimivirus.</title>
        <authorList>
            <person name="Raoult D."/>
            <person name="Audic S."/>
            <person name="Robert C."/>
            <person name="Abergel C."/>
            <person name="Renesto P."/>
            <person name="Ogata H."/>
            <person name="La Scola B."/>
            <person name="Susan M."/>
            <person name="Claverie J.-M."/>
        </authorList>
    </citation>
    <scope>NUCLEOTIDE SEQUENCE [LARGE SCALE GENOMIC DNA]</scope>
    <source>
        <strain>Rowbotham-Bradford</strain>
    </source>
</reference>
<sequence length="196" mass="23416">MKNIAVIFPNQLFEISYLPYDPDSIDVYIIVEDSLYFSDNERFLRFNLLKLIYLRAAMKYYYDYLTDRGYDVIYLDWTGEPSLVFEYVSKNYGSCNLNIIDPVDYLLEERIAEFSDSYNQKIIYYESPGFILTNLDLKQYTGSKQGANKKFFQHSFYAWFRKKFDILMDGNKPIGGKYSYDKYNRQTIPNKIFISF</sequence>
<gene>
    <name type="ordered locus">MIMI_R852</name>
</gene>
<organism>
    <name type="scientific">Acanthamoeba polyphaga mimivirus</name>
    <name type="common">APMV</name>
    <dbReference type="NCBI Taxonomy" id="212035"/>
    <lineage>
        <taxon>Viruses</taxon>
        <taxon>Varidnaviria</taxon>
        <taxon>Bamfordvirae</taxon>
        <taxon>Nucleocytoviricota</taxon>
        <taxon>Megaviricetes</taxon>
        <taxon>Imitervirales</taxon>
        <taxon>Mimiviridae</taxon>
        <taxon>Megamimivirinae</taxon>
        <taxon>Mimivirus</taxon>
        <taxon>Mimivirus bradfordmassiliense</taxon>
    </lineage>
</organism>
<proteinExistence type="predicted"/>
<accession>Q5UP29</accession>
<organismHost>
    <name type="scientific">Acanthamoeba polyphaga</name>
    <name type="common">Amoeba</name>
    <dbReference type="NCBI Taxonomy" id="5757"/>
</organismHost>
<protein>
    <recommendedName>
        <fullName>Uncharacterized protein R852</fullName>
    </recommendedName>
</protein>